<dbReference type="EMBL" id="BC151333">
    <property type="protein sequence ID" value="AAI51334.1"/>
    <property type="molecule type" value="mRNA"/>
</dbReference>
<dbReference type="RefSeq" id="NP_001095699.1">
    <property type="nucleotide sequence ID" value="NM_001102229.2"/>
</dbReference>
<dbReference type="SMR" id="A7MB46"/>
<dbReference type="FunCoup" id="A7MB46">
    <property type="interactions" value="488"/>
</dbReference>
<dbReference type="STRING" id="9913.ENSBTAP00000020655"/>
<dbReference type="GlyCosmos" id="A7MB46">
    <property type="glycosylation" value="3 sites, No reported glycans"/>
</dbReference>
<dbReference type="GlyGen" id="A7MB46">
    <property type="glycosylation" value="3 sites"/>
</dbReference>
<dbReference type="PaxDb" id="9913-ENSBTAP00000020655"/>
<dbReference type="GeneID" id="539464"/>
<dbReference type="KEGG" id="bta:539464"/>
<dbReference type="CTD" id="54510"/>
<dbReference type="eggNOG" id="KOG3594">
    <property type="taxonomic scope" value="Eukaryota"/>
</dbReference>
<dbReference type="InParanoid" id="A7MB46"/>
<dbReference type="OrthoDB" id="6252479at2759"/>
<dbReference type="Proteomes" id="UP000009136">
    <property type="component" value="Unplaced"/>
</dbReference>
<dbReference type="GO" id="GO:0005886">
    <property type="term" value="C:plasma membrane"/>
    <property type="evidence" value="ECO:0000318"/>
    <property type="project" value="GO_Central"/>
</dbReference>
<dbReference type="GO" id="GO:0005509">
    <property type="term" value="F:calcium ion binding"/>
    <property type="evidence" value="ECO:0007669"/>
    <property type="project" value="InterPro"/>
</dbReference>
<dbReference type="GO" id="GO:0007420">
    <property type="term" value="P:brain development"/>
    <property type="evidence" value="ECO:0000250"/>
    <property type="project" value="UniProtKB"/>
</dbReference>
<dbReference type="GO" id="GO:0007155">
    <property type="term" value="P:cell adhesion"/>
    <property type="evidence" value="ECO:0000318"/>
    <property type="project" value="GO_Central"/>
</dbReference>
<dbReference type="GO" id="GO:0007156">
    <property type="term" value="P:homophilic cell adhesion via plasma membrane adhesion molecules"/>
    <property type="evidence" value="ECO:0007669"/>
    <property type="project" value="InterPro"/>
</dbReference>
<dbReference type="CDD" id="cd11304">
    <property type="entry name" value="Cadherin_repeat"/>
    <property type="match status" value="6"/>
</dbReference>
<dbReference type="FunFam" id="2.60.40.60:FF:000001">
    <property type="entry name" value="Protocadherin alpha 2"/>
    <property type="match status" value="1"/>
</dbReference>
<dbReference type="FunFam" id="2.60.40.60:FF:000002">
    <property type="entry name" value="Protocadherin alpha 2"/>
    <property type="match status" value="1"/>
</dbReference>
<dbReference type="FunFam" id="2.60.40.60:FF:000003">
    <property type="entry name" value="Protocadherin alpha 2"/>
    <property type="match status" value="1"/>
</dbReference>
<dbReference type="FunFam" id="2.60.40.60:FF:000007">
    <property type="entry name" value="Protocadherin alpha 2"/>
    <property type="match status" value="1"/>
</dbReference>
<dbReference type="FunFam" id="2.60.40.60:FF:000103">
    <property type="entry name" value="protocadherin-18 isoform X2"/>
    <property type="match status" value="1"/>
</dbReference>
<dbReference type="FunFam" id="2.60.40.60:FF:000133">
    <property type="entry name" value="protocadherin-18 isoform X2"/>
    <property type="match status" value="1"/>
</dbReference>
<dbReference type="Gene3D" id="2.60.40.60">
    <property type="entry name" value="Cadherins"/>
    <property type="match status" value="6"/>
</dbReference>
<dbReference type="InterPro" id="IPR002126">
    <property type="entry name" value="Cadherin-like_dom"/>
</dbReference>
<dbReference type="InterPro" id="IPR015919">
    <property type="entry name" value="Cadherin-like_sf"/>
</dbReference>
<dbReference type="InterPro" id="IPR020894">
    <property type="entry name" value="Cadherin_CS"/>
</dbReference>
<dbReference type="InterPro" id="IPR013164">
    <property type="entry name" value="Cadherin_N"/>
</dbReference>
<dbReference type="InterPro" id="IPR050174">
    <property type="entry name" value="Protocadherin/Cadherin-CA"/>
</dbReference>
<dbReference type="PANTHER" id="PTHR24028">
    <property type="entry name" value="CADHERIN-87A"/>
    <property type="match status" value="1"/>
</dbReference>
<dbReference type="PANTHER" id="PTHR24028:SF9">
    <property type="entry name" value="PROTOCADHERIN-18"/>
    <property type="match status" value="1"/>
</dbReference>
<dbReference type="Pfam" id="PF00028">
    <property type="entry name" value="Cadherin"/>
    <property type="match status" value="5"/>
</dbReference>
<dbReference type="Pfam" id="PF08266">
    <property type="entry name" value="Cadherin_2"/>
    <property type="match status" value="1"/>
</dbReference>
<dbReference type="PRINTS" id="PR00205">
    <property type="entry name" value="CADHERIN"/>
</dbReference>
<dbReference type="SMART" id="SM00112">
    <property type="entry name" value="CA"/>
    <property type="match status" value="6"/>
</dbReference>
<dbReference type="SUPFAM" id="SSF49313">
    <property type="entry name" value="Cadherin-like"/>
    <property type="match status" value="5"/>
</dbReference>
<dbReference type="PROSITE" id="PS00232">
    <property type="entry name" value="CADHERIN_1"/>
    <property type="match status" value="5"/>
</dbReference>
<dbReference type="PROSITE" id="PS50268">
    <property type="entry name" value="CADHERIN_2"/>
    <property type="match status" value="6"/>
</dbReference>
<accession>A7MB46</accession>
<protein>
    <recommendedName>
        <fullName>Protocadherin-18</fullName>
    </recommendedName>
</protein>
<reference key="1">
    <citation type="submission" date="2007-07" db="EMBL/GenBank/DDBJ databases">
        <authorList>
            <consortium name="NIH - Mammalian Gene Collection (MGC) project"/>
        </authorList>
    </citation>
    <scope>NUCLEOTIDE SEQUENCE [LARGE SCALE MRNA]</scope>
    <source>
        <strain>Hereford</strain>
        <tissue>Hypothalamus</tissue>
    </source>
</reference>
<feature type="signal peptide" evidence="2">
    <location>
        <begin position="1"/>
        <end position="27"/>
    </location>
</feature>
<feature type="chain" id="PRO_0000352393" description="Protocadherin-18">
    <location>
        <begin position="28"/>
        <end position="1134"/>
    </location>
</feature>
<feature type="topological domain" description="Extracellular" evidence="2">
    <location>
        <begin position="28"/>
        <end position="699"/>
    </location>
</feature>
<feature type="transmembrane region" description="Helical" evidence="2">
    <location>
        <begin position="700"/>
        <end position="720"/>
    </location>
</feature>
<feature type="topological domain" description="Cytoplasmic" evidence="2">
    <location>
        <begin position="721"/>
        <end position="1134"/>
    </location>
</feature>
<feature type="domain" description="Cadherin 1" evidence="3">
    <location>
        <begin position="28"/>
        <end position="137"/>
    </location>
</feature>
<feature type="domain" description="Cadherin 2" evidence="3">
    <location>
        <begin position="138"/>
        <end position="246"/>
    </location>
</feature>
<feature type="domain" description="Cadherin 3" evidence="3">
    <location>
        <begin position="247"/>
        <end position="354"/>
    </location>
</feature>
<feature type="domain" description="Cadherin 4" evidence="3">
    <location>
        <begin position="361"/>
        <end position="465"/>
    </location>
</feature>
<feature type="domain" description="Cadherin 5" evidence="3">
    <location>
        <begin position="466"/>
        <end position="576"/>
    </location>
</feature>
<feature type="domain" description="Cadherin 6" evidence="3">
    <location>
        <begin position="582"/>
        <end position="697"/>
    </location>
</feature>
<feature type="region of interest" description="Disordered" evidence="4">
    <location>
        <begin position="768"/>
        <end position="800"/>
    </location>
</feature>
<feature type="region of interest" description="Disordered" evidence="4">
    <location>
        <begin position="868"/>
        <end position="888"/>
    </location>
</feature>
<feature type="region of interest" description="Interaction with DAB1" evidence="1">
    <location>
        <begin position="892"/>
        <end position="1134"/>
    </location>
</feature>
<feature type="region of interest" description="Disordered" evidence="4">
    <location>
        <begin position="941"/>
        <end position="1003"/>
    </location>
</feature>
<feature type="compositionally biased region" description="Polar residues" evidence="4">
    <location>
        <begin position="791"/>
        <end position="800"/>
    </location>
</feature>
<feature type="compositionally biased region" description="Basic and acidic residues" evidence="4">
    <location>
        <begin position="868"/>
        <end position="877"/>
    </location>
</feature>
<feature type="glycosylation site" description="N-linked (GlcNAc...) asparagine" evidence="2">
    <location>
        <position position="103"/>
    </location>
</feature>
<feature type="glycosylation site" description="N-linked (GlcNAc...) asparagine" evidence="2">
    <location>
        <position position="269"/>
    </location>
</feature>
<feature type="glycosylation site" description="N-linked (GlcNAc...) asparagine" evidence="2">
    <location>
        <position position="559"/>
    </location>
</feature>
<gene>
    <name type="primary">PCDH18</name>
</gene>
<name>PCD18_BOVIN</name>
<keyword id="KW-0106">Calcium</keyword>
<keyword id="KW-0130">Cell adhesion</keyword>
<keyword id="KW-1003">Cell membrane</keyword>
<keyword id="KW-0325">Glycoprotein</keyword>
<keyword id="KW-0472">Membrane</keyword>
<keyword id="KW-1185">Reference proteome</keyword>
<keyword id="KW-0677">Repeat</keyword>
<keyword id="KW-0732">Signal</keyword>
<keyword id="KW-0812">Transmembrane</keyword>
<keyword id="KW-1133">Transmembrane helix</keyword>
<proteinExistence type="evidence at transcript level"/>
<sequence length="1134" mass="125864">MYQMNAKMHFTFVFALLVVSFNLDVLGKNLKYRIYEEQRVGSVIARLSEDVADVLVKLPNPSTVRFRAMQRGNTPLLVVNEDNGEISIGAKIDREQLCQKNLNCSIEFDVITLPTEHLQLFHIEVEVLDINDNSPQFSRSLIPIEISESAAVGTRIPLDSAFDPDVGENSLHTYSLSANDFFNIEVRTRTDGAKYAELIVVRELDRELKSSYELQLTASDMGVPQRSGSSILKISISDSNDNSPAFEQQSYIIQLLENSPVGTLLLDLNATDPDEGANGKIVYSFSSHVSPKIIETFKIDSERGHLTLFKQVDYEITKSYEIDVQAQDLGPNSIPAHCKIIIKVVDVNDNKPEISINLMSPGKEEISYIFEGDPIDTFVALVRVQDKDSGLNGEIVCKLHGHGHFKLQKTYENNYLILTNATLDREKRSEYSLTVIAEDKGTPSLSTVKHFTVQINDINDNPPHFQRSRYEFAISENNSPGAYITTVTATDPDLGENGQVTYTILESFILGSSITTYDTIDPSNGAIYALRIFDHEEVSQITFVVEARDGGSPKQLVSNTTVVLTIIDENDNVPVVIGPALRNNTAEISIPKGAESGFHVTRIRAIDRDSGVNAELSCSIVAGNEENIFVIDPRSCDIHTNVSMESVPYTEWELSVVIQDKGNPQLHTKVLLKCVIFEYAESVTSTAMTSVSQAPLDVSMIIIISLGAICAVLLVIMVLFATRCNREKKDTRSYNCRVAESTYQHHPKRPSRQIHKGDITLVPTVNGTLPIRSHHRSSPSSSPTLERGQMGSRQSHNSHQSLNSLVTISSNHVPENFSLELTHATPAVEVSQLLSMLHQGQYQPRPSFRGNKYSRSYRYALQDMDKFSLKDSGRGDSEAGDSDYDLGRDSPIDRLLGEGFSDLFLTDGRIPAAMRLCTEECRVLGHSDQCWMPPLPSPSSDYRSNMFIPGEEFPAQPQQQHPHQSLEDDVQPVDSGEKKKSFSTFGKDSPSEEDSGDTSTSSLLSEMSSVFQRLLPASLDTYSECTEMDRSNSLERRKGPLPAKTVGYPQGVAAWAASTHFQNPTNNSGPPLGTHSSVQPSSKWLPAMEEIPENYEEDDFDNVLNHLNDGKHELMDASELVAEINKLLQDVRQS</sequence>
<organism>
    <name type="scientific">Bos taurus</name>
    <name type="common">Bovine</name>
    <dbReference type="NCBI Taxonomy" id="9913"/>
    <lineage>
        <taxon>Eukaryota</taxon>
        <taxon>Metazoa</taxon>
        <taxon>Chordata</taxon>
        <taxon>Craniata</taxon>
        <taxon>Vertebrata</taxon>
        <taxon>Euteleostomi</taxon>
        <taxon>Mammalia</taxon>
        <taxon>Eutheria</taxon>
        <taxon>Laurasiatheria</taxon>
        <taxon>Artiodactyla</taxon>
        <taxon>Ruminantia</taxon>
        <taxon>Pecora</taxon>
        <taxon>Bovidae</taxon>
        <taxon>Bovinae</taxon>
        <taxon>Bos</taxon>
    </lineage>
</organism>
<evidence type="ECO:0000250" key="1"/>
<evidence type="ECO:0000255" key="2"/>
<evidence type="ECO:0000255" key="3">
    <source>
        <dbReference type="PROSITE-ProRule" id="PRU00043"/>
    </source>
</evidence>
<evidence type="ECO:0000256" key="4">
    <source>
        <dbReference type="SAM" id="MobiDB-lite"/>
    </source>
</evidence>
<comment type="function">
    <text>Potential calcium-dependent cell-adhesion protein.</text>
</comment>
<comment type="subunit">
    <text evidence="1">Interacts with DAB1.</text>
</comment>
<comment type="subcellular location">
    <subcellularLocation>
        <location evidence="1">Cell membrane</location>
        <topology evidence="1">Single-pass type I membrane protein</topology>
    </subcellularLocation>
</comment>